<sequence>MSFPEGKDILLMGNEAAKAAEAFQRSLKKIGHRRTQSIVGDKIITVSETVEKPTISKSTKVTTPPERRNAWGEKPDTTRNQTEEARNEATLEDTSRLYEEVFAPTSDGKTPAEEGMETPEKPKKKVTFKNDESGRYTKLEMEALELLSDNEDDDAESSVLTFEEKDTSALSLEARLESIDEKLSMILGLLRTLNVATAGPTAARDGIRDAMVGLREELIADIIKEAKGKAAEMMKEEAKQKSKIGNGSVGLTEKAKELNKIVEDESTSGESEEEEEEEDEEESNPDDDLYSLTM</sequence>
<dbReference type="EMBL" id="DQ009484">
    <property type="protein sequence ID" value="AAY81655.1"/>
    <property type="molecule type" value="Viral_cRNA"/>
</dbReference>
<dbReference type="RefSeq" id="YP_443838.1">
    <property type="nucleotide sequence ID" value="NC_007652.1"/>
</dbReference>
<dbReference type="SMR" id="Q2Y2M5"/>
<dbReference type="Proteomes" id="UP000002471">
    <property type="component" value="Segment"/>
</dbReference>
<dbReference type="GO" id="GO:0030430">
    <property type="term" value="C:host cell cytoplasm"/>
    <property type="evidence" value="ECO:0007669"/>
    <property type="project" value="UniProtKB-SubCell"/>
</dbReference>
<dbReference type="GO" id="GO:0044423">
    <property type="term" value="C:virion component"/>
    <property type="evidence" value="ECO:0007669"/>
    <property type="project" value="UniProtKB-KW"/>
</dbReference>
<dbReference type="GO" id="GO:0003968">
    <property type="term" value="F:RNA-directed RNA polymerase activity"/>
    <property type="evidence" value="ECO:0007669"/>
    <property type="project" value="InterPro"/>
</dbReference>
<dbReference type="InterPro" id="IPR003487">
    <property type="entry name" value="Pprotein_pneumovir"/>
</dbReference>
<dbReference type="Pfam" id="PF02478">
    <property type="entry name" value="Pneumo_phosprot"/>
    <property type="match status" value="1"/>
</dbReference>
<organism>
    <name type="scientific">Avian metapneumovirus (isolate Canada goose/Minnesota/15a/2001)</name>
    <name type="common">AMPV</name>
    <dbReference type="NCBI Taxonomy" id="652954"/>
    <lineage>
        <taxon>Viruses</taxon>
        <taxon>Riboviria</taxon>
        <taxon>Orthornavirae</taxon>
        <taxon>Negarnaviricota</taxon>
        <taxon>Haploviricotina</taxon>
        <taxon>Monjiviricetes</taxon>
        <taxon>Mononegavirales</taxon>
        <taxon>Pneumoviridae</taxon>
        <taxon>Metapneumovirus</taxon>
        <taxon>Metapneumovirus avis</taxon>
    </lineage>
</organism>
<keyword id="KW-1035">Host cytoplasm</keyword>
<keyword id="KW-0597">Phosphoprotein</keyword>
<keyword id="KW-1185">Reference proteome</keyword>
<keyword id="KW-0693">Viral RNA replication</keyword>
<keyword id="KW-0946">Virion</keyword>
<evidence type="ECO:0000250" key="1">
    <source>
        <dbReference type="UniProtKB" id="P03421"/>
    </source>
</evidence>
<evidence type="ECO:0000250" key="2">
    <source>
        <dbReference type="UniProtKB" id="Q8B9Q8"/>
    </source>
</evidence>
<evidence type="ECO:0000256" key="3">
    <source>
        <dbReference type="SAM" id="MobiDB-lite"/>
    </source>
</evidence>
<evidence type="ECO:0000305" key="4"/>
<feature type="chain" id="PRO_0000390370" description="Phosphoprotein">
    <location>
        <begin position="1"/>
        <end position="294"/>
    </location>
</feature>
<feature type="region of interest" description="Binding to monomeric RNA-free nucleoprotein" evidence="2">
    <location>
        <begin position="12"/>
        <end position="28"/>
    </location>
</feature>
<feature type="region of interest" description="Disordered" evidence="3">
    <location>
        <begin position="52"/>
        <end position="97"/>
    </location>
</feature>
<feature type="region of interest" description="Binding to host phosphatase PP1" evidence="1">
    <location>
        <begin position="123"/>
        <end position="128"/>
    </location>
</feature>
<feature type="region of interest" description="Binding to protein M2-1" evidence="1">
    <location>
        <begin position="135"/>
        <end position="157"/>
    </location>
</feature>
<feature type="region of interest" description="Oligomerization and binding to RNA-directed RNA polymerase L" evidence="2">
    <location>
        <begin position="169"/>
        <end position="194"/>
    </location>
</feature>
<feature type="region of interest" description="Disordered" evidence="3">
    <location>
        <begin position="234"/>
        <end position="294"/>
    </location>
</feature>
<feature type="region of interest" description="Binding to RNA-directed RNA polymerase L" evidence="1">
    <location>
        <begin position="251"/>
        <end position="279"/>
    </location>
</feature>
<feature type="region of interest" description="Binding to the N-RNA complex" evidence="1">
    <location>
        <begin position="281"/>
        <end position="294"/>
    </location>
</feature>
<feature type="compositionally biased region" description="Basic and acidic residues" evidence="3">
    <location>
        <begin position="65"/>
        <end position="97"/>
    </location>
</feature>
<feature type="compositionally biased region" description="Basic and acidic residues" evidence="3">
    <location>
        <begin position="253"/>
        <end position="263"/>
    </location>
</feature>
<feature type="compositionally biased region" description="Acidic residues" evidence="3">
    <location>
        <begin position="264"/>
        <end position="294"/>
    </location>
</feature>
<feature type="modified residue" description="Phosphoserine" evidence="1">
    <location>
        <position position="106"/>
    </location>
</feature>
<feature type="modified residue" description="Phosphoserine" evidence="1">
    <location>
        <position position="148"/>
    </location>
</feature>
<feature type="modified residue" description="Phosphoserine" evidence="1">
    <location>
        <position position="157"/>
    </location>
</feature>
<feature type="modified residue" description="Phosphoserine" evidence="1">
    <location>
        <position position="158"/>
    </location>
</feature>
<feature type="modified residue" description="Phosphoserine" evidence="1">
    <location>
        <position position="168"/>
    </location>
</feature>
<feature type="modified residue" description="Phosphoserine" evidence="1">
    <location>
        <position position="171"/>
    </location>
</feature>
<accession>Q2Y2M5</accession>
<name>PHOSP_AMPV1</name>
<comment type="function">
    <text evidence="1 2">Plays critical roles in regulating RNA replication and transcription through its interactions with multiple proteins (By similarity). Tethers the RNA-directed RNA polymerase L to the nucleoprotein-RNA complex (By similarity). Recruits the M2-1 protein, a processivity factor that is required for efficient transcription of viral RNA. Acts as a chaperone for neo-synthesized nucleoprotein by forming an N-P complex that preserves N in a monomeric and RNA-free state and prevents the association of nascent N with host cell RNAs. Recruits the host phosphatase PP1 to inclusion bodies to regulate viral transcription (By similarity).</text>
</comment>
<comment type="subunit">
    <text evidence="1 2">Homotetramer (By similarity). Interacts with protein M2-1; the interaction between the two tetramers is required for the anti-termination and elongation transcriptional activities of protein M2-1. Interacts with host phosphatase PP1; this interaction recruits PP1 to the inclusion bodies. Formation of a complex PP1/M2-1/P allows P to target host PP1 phosphatase to the M2-1 substrate. Interacts with the nucleoprotein N; the phosphorylated phosphoprotein P binds to N-RNA complex. Interacts with the monomeric RNA-free nucleoprotein N (By similarity). Interacts with RNA-directed RNA polymerase L (via N-terminus); the association of P and L forms the polymerase complex (By similarity).</text>
</comment>
<comment type="subcellular location">
    <subcellularLocation>
        <location evidence="1">Virion</location>
    </subcellularLocation>
    <subcellularLocation>
        <location evidence="1">Host cytoplasm</location>
    </subcellularLocation>
    <text evidence="1">Localizes in cytoplasmic inclusion bodies.</text>
</comment>
<comment type="PTM">
    <text evidence="1">Constitutively phosphorylated by host.</text>
</comment>
<comment type="similarity">
    <text evidence="4">Belongs to the pneumoviridae phosphoprotein P family.</text>
</comment>
<proteinExistence type="inferred from homology"/>
<organismHost>
    <name type="scientific">Anser sp.</name>
    <name type="common">goose</name>
    <dbReference type="NCBI Taxonomy" id="8847"/>
</organismHost>
<organismHost>
    <name type="scientific">Meleagris gallopavo</name>
    <name type="common">Wild turkey</name>
    <dbReference type="NCBI Taxonomy" id="9103"/>
</organismHost>
<reference key="1">
    <citation type="journal article" date="2004" name="Avian Dis.">
        <title>Evidence of avian pneumovirus spread beyond Minnesota among wild and domestic birds in central North America.</title>
        <authorList>
            <person name="Bennett R.S."/>
            <person name="Nezworski J."/>
            <person name="Velayudhan B.T."/>
            <person name="Nagaraja K.V."/>
            <person name="Zeman D.H."/>
            <person name="Dyer N."/>
            <person name="Graham T."/>
            <person name="Lauer D.C."/>
            <person name="Njenga M.K."/>
            <person name="Halvorson D.A."/>
        </authorList>
    </citation>
    <scope>NUCLEOTIDE SEQUENCE [GENOMIC RNA]</scope>
</reference>
<reference key="2">
    <citation type="journal article" date="2005" name="J. Virol.">
        <title>A wild goose metapneumovirus containing a large attachment glycoprotein is avirulent but immunoprotective in domestic turkeys.</title>
        <authorList>
            <person name="Bennett R.S."/>
            <person name="LaRue R."/>
            <person name="Shaw D."/>
            <person name="Yu Q."/>
            <person name="Nagaraja K.V."/>
            <person name="Halvorson D.A."/>
            <person name="Njenga M.K."/>
        </authorList>
    </citation>
    <scope>NUCLEOTIDE SEQUENCE [GENOMIC RNA]</scope>
</reference>
<protein>
    <recommendedName>
        <fullName>Phosphoprotein</fullName>
    </recommendedName>
</protein>